<proteinExistence type="inferred from homology"/>
<protein>
    <recommendedName>
        <fullName evidence="1">Octanoyltransferase</fullName>
        <ecNumber evidence="1">2.3.1.181</ecNumber>
    </recommendedName>
    <alternativeName>
        <fullName evidence="1">Lipoate-protein ligase B</fullName>
    </alternativeName>
    <alternativeName>
        <fullName evidence="1">Lipoyl/octanoyl transferase</fullName>
    </alternativeName>
    <alternativeName>
        <fullName evidence="1">Octanoyl-[acyl-carrier-protein]-protein N-octanoyltransferase</fullName>
    </alternativeName>
</protein>
<keyword id="KW-0012">Acyltransferase</keyword>
<keyword id="KW-0963">Cytoplasm</keyword>
<keyword id="KW-1185">Reference proteome</keyword>
<keyword id="KW-0808">Transferase</keyword>
<accession>Q6D7M7</accession>
<dbReference type="EC" id="2.3.1.181" evidence="1"/>
<dbReference type="EMBL" id="BX950851">
    <property type="protein sequence ID" value="CAG74208.1"/>
    <property type="molecule type" value="Genomic_DNA"/>
</dbReference>
<dbReference type="RefSeq" id="WP_011092885.1">
    <property type="nucleotide sequence ID" value="NC_004547.2"/>
</dbReference>
<dbReference type="SMR" id="Q6D7M7"/>
<dbReference type="STRING" id="218491.ECA1298"/>
<dbReference type="KEGG" id="eca:ECA1298"/>
<dbReference type="eggNOG" id="COG0321">
    <property type="taxonomic scope" value="Bacteria"/>
</dbReference>
<dbReference type="HOGENOM" id="CLU_035168_3_1_6"/>
<dbReference type="UniPathway" id="UPA00538">
    <property type="reaction ID" value="UER00592"/>
</dbReference>
<dbReference type="Proteomes" id="UP000007966">
    <property type="component" value="Chromosome"/>
</dbReference>
<dbReference type="GO" id="GO:0005737">
    <property type="term" value="C:cytoplasm"/>
    <property type="evidence" value="ECO:0007669"/>
    <property type="project" value="UniProtKB-SubCell"/>
</dbReference>
<dbReference type="GO" id="GO:0033819">
    <property type="term" value="F:lipoyl(octanoyl) transferase activity"/>
    <property type="evidence" value="ECO:0007669"/>
    <property type="project" value="UniProtKB-EC"/>
</dbReference>
<dbReference type="GO" id="GO:0036211">
    <property type="term" value="P:protein modification process"/>
    <property type="evidence" value="ECO:0007669"/>
    <property type="project" value="InterPro"/>
</dbReference>
<dbReference type="CDD" id="cd16444">
    <property type="entry name" value="LipB"/>
    <property type="match status" value="1"/>
</dbReference>
<dbReference type="FunFam" id="3.30.930.10:FF:000020">
    <property type="entry name" value="Octanoyltransferase"/>
    <property type="match status" value="1"/>
</dbReference>
<dbReference type="Gene3D" id="3.30.930.10">
    <property type="entry name" value="Bira Bifunctional Protein, Domain 2"/>
    <property type="match status" value="1"/>
</dbReference>
<dbReference type="HAMAP" id="MF_00013">
    <property type="entry name" value="LipB"/>
    <property type="match status" value="1"/>
</dbReference>
<dbReference type="InterPro" id="IPR045864">
    <property type="entry name" value="aa-tRNA-synth_II/BPL/LPL"/>
</dbReference>
<dbReference type="InterPro" id="IPR004143">
    <property type="entry name" value="BPL_LPL_catalytic"/>
</dbReference>
<dbReference type="InterPro" id="IPR000544">
    <property type="entry name" value="Octanoyltransferase"/>
</dbReference>
<dbReference type="InterPro" id="IPR020605">
    <property type="entry name" value="Octanoyltransferase_CS"/>
</dbReference>
<dbReference type="NCBIfam" id="TIGR00214">
    <property type="entry name" value="lipB"/>
    <property type="match status" value="1"/>
</dbReference>
<dbReference type="NCBIfam" id="NF010922">
    <property type="entry name" value="PRK14342.1"/>
    <property type="match status" value="1"/>
</dbReference>
<dbReference type="PANTHER" id="PTHR10993:SF7">
    <property type="entry name" value="LIPOYLTRANSFERASE 2, MITOCHONDRIAL-RELATED"/>
    <property type="match status" value="1"/>
</dbReference>
<dbReference type="PANTHER" id="PTHR10993">
    <property type="entry name" value="OCTANOYLTRANSFERASE"/>
    <property type="match status" value="1"/>
</dbReference>
<dbReference type="Pfam" id="PF21948">
    <property type="entry name" value="LplA-B_cat"/>
    <property type="match status" value="1"/>
</dbReference>
<dbReference type="PIRSF" id="PIRSF016262">
    <property type="entry name" value="LPLase"/>
    <property type="match status" value="1"/>
</dbReference>
<dbReference type="SUPFAM" id="SSF55681">
    <property type="entry name" value="Class II aaRS and biotin synthetases"/>
    <property type="match status" value="1"/>
</dbReference>
<dbReference type="PROSITE" id="PS51733">
    <property type="entry name" value="BPL_LPL_CATALYTIC"/>
    <property type="match status" value="1"/>
</dbReference>
<dbReference type="PROSITE" id="PS01313">
    <property type="entry name" value="LIPB"/>
    <property type="match status" value="1"/>
</dbReference>
<organism>
    <name type="scientific">Pectobacterium atrosepticum (strain SCRI 1043 / ATCC BAA-672)</name>
    <name type="common">Erwinia carotovora subsp. atroseptica</name>
    <dbReference type="NCBI Taxonomy" id="218491"/>
    <lineage>
        <taxon>Bacteria</taxon>
        <taxon>Pseudomonadati</taxon>
        <taxon>Pseudomonadota</taxon>
        <taxon>Gammaproteobacteria</taxon>
        <taxon>Enterobacterales</taxon>
        <taxon>Pectobacteriaceae</taxon>
        <taxon>Pectobacterium</taxon>
    </lineage>
</organism>
<gene>
    <name evidence="1" type="primary">lipB</name>
    <name type="ordered locus">ECA1298</name>
</gene>
<sequence length="227" mass="25288">MTHLLQDKIIVRQFNVQPYEPVSLAMHNFTDRRDDKTPDEIWLVQHPRVFTQGQAGKEEHVLMPGDIPVIQSDRGGQVTYHGPGQQVMYVLIDLKRRKLGVRQLVTAIENTVIGTLAHFQIKAHARPDAPGVYVGERKICSLGLRIRKGCSFHGLALNIAMDLSPFLRINPCGYAGMEMTQVSDLVPGVTLDDTSPVLVNTFLQLVGYSAPEFIPWALDVQGEPLPD</sequence>
<comment type="function">
    <text evidence="1">Catalyzes the transfer of endogenously produced octanoic acid from octanoyl-acyl-carrier-protein onto the lipoyl domains of lipoate-dependent enzymes. Lipoyl-ACP can also act as a substrate although octanoyl-ACP is likely to be the physiological substrate.</text>
</comment>
<comment type="catalytic activity">
    <reaction evidence="1">
        <text>octanoyl-[ACP] + L-lysyl-[protein] = N(6)-octanoyl-L-lysyl-[protein] + holo-[ACP] + H(+)</text>
        <dbReference type="Rhea" id="RHEA:17665"/>
        <dbReference type="Rhea" id="RHEA-COMP:9636"/>
        <dbReference type="Rhea" id="RHEA-COMP:9685"/>
        <dbReference type="Rhea" id="RHEA-COMP:9752"/>
        <dbReference type="Rhea" id="RHEA-COMP:9928"/>
        <dbReference type="ChEBI" id="CHEBI:15378"/>
        <dbReference type="ChEBI" id="CHEBI:29969"/>
        <dbReference type="ChEBI" id="CHEBI:64479"/>
        <dbReference type="ChEBI" id="CHEBI:78463"/>
        <dbReference type="ChEBI" id="CHEBI:78809"/>
        <dbReference type="EC" id="2.3.1.181"/>
    </reaction>
</comment>
<comment type="pathway">
    <text evidence="1">Protein modification; protein lipoylation via endogenous pathway; protein N(6)-(lipoyl)lysine from octanoyl-[acyl-carrier-protein]: step 1/2.</text>
</comment>
<comment type="subcellular location">
    <subcellularLocation>
        <location evidence="1">Cytoplasm</location>
    </subcellularLocation>
</comment>
<comment type="miscellaneous">
    <text evidence="1">In the reaction, the free carboxyl group of octanoic acid is attached via an amide linkage to the epsilon-amino group of a specific lysine residue of lipoyl domains of lipoate-dependent enzymes.</text>
</comment>
<comment type="similarity">
    <text evidence="1">Belongs to the LipB family.</text>
</comment>
<reference key="1">
    <citation type="journal article" date="2004" name="Proc. Natl. Acad. Sci. U.S.A.">
        <title>Genome sequence of the enterobacterial phytopathogen Erwinia carotovora subsp. atroseptica and characterization of virulence factors.</title>
        <authorList>
            <person name="Bell K.S."/>
            <person name="Sebaihia M."/>
            <person name="Pritchard L."/>
            <person name="Holden M.T.G."/>
            <person name="Hyman L.J."/>
            <person name="Holeva M.C."/>
            <person name="Thomson N.R."/>
            <person name="Bentley S.D."/>
            <person name="Churcher L.J.C."/>
            <person name="Mungall K."/>
            <person name="Atkin R."/>
            <person name="Bason N."/>
            <person name="Brooks K."/>
            <person name="Chillingworth T."/>
            <person name="Clark K."/>
            <person name="Doggett J."/>
            <person name="Fraser A."/>
            <person name="Hance Z."/>
            <person name="Hauser H."/>
            <person name="Jagels K."/>
            <person name="Moule S."/>
            <person name="Norbertczak H."/>
            <person name="Ormond D."/>
            <person name="Price C."/>
            <person name="Quail M.A."/>
            <person name="Sanders M."/>
            <person name="Walker D."/>
            <person name="Whitehead S."/>
            <person name="Salmond G.P.C."/>
            <person name="Birch P.R.J."/>
            <person name="Parkhill J."/>
            <person name="Toth I.K."/>
        </authorList>
    </citation>
    <scope>NUCLEOTIDE SEQUENCE [LARGE SCALE GENOMIC DNA]</scope>
    <source>
        <strain>SCRI 1043 / ATCC BAA-672</strain>
    </source>
</reference>
<name>LIPB_PECAS</name>
<feature type="chain" id="PRO_0000062837" description="Octanoyltransferase">
    <location>
        <begin position="1"/>
        <end position="227"/>
    </location>
</feature>
<feature type="domain" description="BPL/LPL catalytic" evidence="2">
    <location>
        <begin position="35"/>
        <end position="210"/>
    </location>
</feature>
<feature type="active site" description="Acyl-thioester intermediate" evidence="1">
    <location>
        <position position="172"/>
    </location>
</feature>
<feature type="binding site" evidence="1">
    <location>
        <begin position="74"/>
        <end position="81"/>
    </location>
    <ligand>
        <name>substrate</name>
    </ligand>
</feature>
<feature type="binding site" evidence="1">
    <location>
        <begin position="141"/>
        <end position="143"/>
    </location>
    <ligand>
        <name>substrate</name>
    </ligand>
</feature>
<feature type="binding site" evidence="1">
    <location>
        <begin position="154"/>
        <end position="156"/>
    </location>
    <ligand>
        <name>substrate</name>
    </ligand>
</feature>
<feature type="site" description="Lowers pKa of active site Cys" evidence="1">
    <location>
        <position position="138"/>
    </location>
</feature>
<evidence type="ECO:0000255" key="1">
    <source>
        <dbReference type="HAMAP-Rule" id="MF_00013"/>
    </source>
</evidence>
<evidence type="ECO:0000255" key="2">
    <source>
        <dbReference type="PROSITE-ProRule" id="PRU01067"/>
    </source>
</evidence>